<accession>Q2YAV1</accession>
<reference key="1">
    <citation type="submission" date="2005-08" db="EMBL/GenBank/DDBJ databases">
        <title>Complete sequence of chromosome 1 of Nitrosospira multiformis ATCC 25196.</title>
        <authorList>
            <person name="Copeland A."/>
            <person name="Lucas S."/>
            <person name="Lapidus A."/>
            <person name="Barry K."/>
            <person name="Detter J.C."/>
            <person name="Glavina T."/>
            <person name="Hammon N."/>
            <person name="Israni S."/>
            <person name="Pitluck S."/>
            <person name="Chain P."/>
            <person name="Malfatti S."/>
            <person name="Shin M."/>
            <person name="Vergez L."/>
            <person name="Schmutz J."/>
            <person name="Larimer F."/>
            <person name="Land M."/>
            <person name="Hauser L."/>
            <person name="Kyrpides N."/>
            <person name="Lykidis A."/>
            <person name="Richardson P."/>
        </authorList>
    </citation>
    <scope>NUCLEOTIDE SEQUENCE [LARGE SCALE GENOMIC DNA]</scope>
    <source>
        <strain>ATCC 25196 / NCIMB 11849 / C 71</strain>
    </source>
</reference>
<comment type="function">
    <text evidence="1">Catalyzes the hydrolysis of the adenine ring of phosphoribosyl-AMP.</text>
</comment>
<comment type="catalytic activity">
    <reaction evidence="1">
        <text>1-(5-phospho-beta-D-ribosyl)-5'-AMP + H2O = 1-(5-phospho-beta-D-ribosyl)-5-[(5-phospho-beta-D-ribosylamino)methylideneamino]imidazole-4-carboxamide</text>
        <dbReference type="Rhea" id="RHEA:20049"/>
        <dbReference type="ChEBI" id="CHEBI:15377"/>
        <dbReference type="ChEBI" id="CHEBI:58435"/>
        <dbReference type="ChEBI" id="CHEBI:59457"/>
        <dbReference type="EC" id="3.5.4.19"/>
    </reaction>
</comment>
<comment type="cofactor">
    <cofactor evidence="1">
        <name>Mg(2+)</name>
        <dbReference type="ChEBI" id="CHEBI:18420"/>
    </cofactor>
    <text evidence="1">Binds 1 Mg(2+) ion per subunit.</text>
</comment>
<comment type="cofactor">
    <cofactor evidence="1">
        <name>Zn(2+)</name>
        <dbReference type="ChEBI" id="CHEBI:29105"/>
    </cofactor>
    <text evidence="1">Binds 1 zinc ion per subunit.</text>
</comment>
<comment type="pathway">
    <text evidence="1">Amino-acid biosynthesis; L-histidine biosynthesis; L-histidine from 5-phospho-alpha-D-ribose 1-diphosphate: step 3/9.</text>
</comment>
<comment type="subunit">
    <text evidence="1">Homodimer.</text>
</comment>
<comment type="subcellular location">
    <subcellularLocation>
        <location evidence="1">Cytoplasm</location>
    </subcellularLocation>
</comment>
<comment type="similarity">
    <text evidence="1">Belongs to the PRA-CH family.</text>
</comment>
<evidence type="ECO:0000255" key="1">
    <source>
        <dbReference type="HAMAP-Rule" id="MF_01021"/>
    </source>
</evidence>
<keyword id="KW-0028">Amino-acid biosynthesis</keyword>
<keyword id="KW-0963">Cytoplasm</keyword>
<keyword id="KW-0368">Histidine biosynthesis</keyword>
<keyword id="KW-0378">Hydrolase</keyword>
<keyword id="KW-0460">Magnesium</keyword>
<keyword id="KW-0479">Metal-binding</keyword>
<keyword id="KW-1185">Reference proteome</keyword>
<keyword id="KW-0862">Zinc</keyword>
<sequence length="130" mass="14963">MSDTWLNKVNWSADGLVPVVTQDAISNKVLMVAWMNPEALRLTAQTGEAHYWSRSRKKLWHKGEESGHVQKVKEIRLDCDEDVLLLVVEQVGGVACHTGRHHCFFKKLEQDQWLVTEPVIKNPEEIYGQR</sequence>
<proteinExistence type="inferred from homology"/>
<organism>
    <name type="scientific">Nitrosospira multiformis (strain ATCC 25196 / NCIMB 11849 / C 71)</name>
    <dbReference type="NCBI Taxonomy" id="323848"/>
    <lineage>
        <taxon>Bacteria</taxon>
        <taxon>Pseudomonadati</taxon>
        <taxon>Pseudomonadota</taxon>
        <taxon>Betaproteobacteria</taxon>
        <taxon>Nitrosomonadales</taxon>
        <taxon>Nitrosomonadaceae</taxon>
        <taxon>Nitrosospira</taxon>
    </lineage>
</organism>
<name>HIS3_NITMU</name>
<dbReference type="EC" id="3.5.4.19" evidence="1"/>
<dbReference type="EMBL" id="CP000103">
    <property type="protein sequence ID" value="ABB74120.1"/>
    <property type="molecule type" value="Genomic_DNA"/>
</dbReference>
<dbReference type="RefSeq" id="WP_011380168.1">
    <property type="nucleotide sequence ID" value="NC_007614.1"/>
</dbReference>
<dbReference type="SMR" id="Q2YAV1"/>
<dbReference type="STRING" id="323848.Nmul_A0813"/>
<dbReference type="KEGG" id="nmu:Nmul_A0813"/>
<dbReference type="eggNOG" id="COG0139">
    <property type="taxonomic scope" value="Bacteria"/>
</dbReference>
<dbReference type="HOGENOM" id="CLU_048577_5_0_4"/>
<dbReference type="OrthoDB" id="9795769at2"/>
<dbReference type="UniPathway" id="UPA00031">
    <property type="reaction ID" value="UER00008"/>
</dbReference>
<dbReference type="Proteomes" id="UP000002718">
    <property type="component" value="Chromosome"/>
</dbReference>
<dbReference type="GO" id="GO:0005737">
    <property type="term" value="C:cytoplasm"/>
    <property type="evidence" value="ECO:0007669"/>
    <property type="project" value="UniProtKB-SubCell"/>
</dbReference>
<dbReference type="GO" id="GO:0000287">
    <property type="term" value="F:magnesium ion binding"/>
    <property type="evidence" value="ECO:0007669"/>
    <property type="project" value="UniProtKB-UniRule"/>
</dbReference>
<dbReference type="GO" id="GO:0004635">
    <property type="term" value="F:phosphoribosyl-AMP cyclohydrolase activity"/>
    <property type="evidence" value="ECO:0007669"/>
    <property type="project" value="UniProtKB-UniRule"/>
</dbReference>
<dbReference type="GO" id="GO:0008270">
    <property type="term" value="F:zinc ion binding"/>
    <property type="evidence" value="ECO:0007669"/>
    <property type="project" value="UniProtKB-UniRule"/>
</dbReference>
<dbReference type="GO" id="GO:0000105">
    <property type="term" value="P:L-histidine biosynthetic process"/>
    <property type="evidence" value="ECO:0007669"/>
    <property type="project" value="UniProtKB-UniRule"/>
</dbReference>
<dbReference type="FunFam" id="3.10.20.810:FF:000001">
    <property type="entry name" value="Histidine biosynthesis bifunctional protein HisIE"/>
    <property type="match status" value="1"/>
</dbReference>
<dbReference type="Gene3D" id="3.10.20.810">
    <property type="entry name" value="Phosphoribosyl-AMP cyclohydrolase"/>
    <property type="match status" value="1"/>
</dbReference>
<dbReference type="HAMAP" id="MF_01021">
    <property type="entry name" value="HisI"/>
    <property type="match status" value="1"/>
</dbReference>
<dbReference type="InterPro" id="IPR026660">
    <property type="entry name" value="PRA-CH"/>
</dbReference>
<dbReference type="InterPro" id="IPR002496">
    <property type="entry name" value="PRib_AMP_CycHydrolase_dom"/>
</dbReference>
<dbReference type="InterPro" id="IPR038019">
    <property type="entry name" value="PRib_AMP_CycHydrolase_sf"/>
</dbReference>
<dbReference type="NCBIfam" id="NF000768">
    <property type="entry name" value="PRK00051.1"/>
    <property type="match status" value="1"/>
</dbReference>
<dbReference type="PANTHER" id="PTHR42945">
    <property type="entry name" value="HISTIDINE BIOSYNTHESIS BIFUNCTIONAL PROTEIN"/>
    <property type="match status" value="1"/>
</dbReference>
<dbReference type="PANTHER" id="PTHR42945:SF1">
    <property type="entry name" value="HISTIDINE BIOSYNTHESIS BIFUNCTIONAL PROTEIN HIS7"/>
    <property type="match status" value="1"/>
</dbReference>
<dbReference type="Pfam" id="PF01502">
    <property type="entry name" value="PRA-CH"/>
    <property type="match status" value="1"/>
</dbReference>
<dbReference type="SUPFAM" id="SSF141734">
    <property type="entry name" value="HisI-like"/>
    <property type="match status" value="1"/>
</dbReference>
<protein>
    <recommendedName>
        <fullName evidence="1">Phosphoribosyl-AMP cyclohydrolase</fullName>
        <shortName evidence="1">PRA-CH</shortName>
        <ecNumber evidence="1">3.5.4.19</ecNumber>
    </recommendedName>
</protein>
<gene>
    <name evidence="1" type="primary">hisI</name>
    <name type="ordered locus">Nmul_A0813</name>
</gene>
<feature type="chain" id="PRO_0000229829" description="Phosphoribosyl-AMP cyclohydrolase">
    <location>
        <begin position="1"/>
        <end position="130"/>
    </location>
</feature>
<feature type="binding site" evidence="1">
    <location>
        <position position="78"/>
    </location>
    <ligand>
        <name>Mg(2+)</name>
        <dbReference type="ChEBI" id="CHEBI:18420"/>
    </ligand>
</feature>
<feature type="binding site" evidence="1">
    <location>
        <position position="79"/>
    </location>
    <ligand>
        <name>Zn(2+)</name>
        <dbReference type="ChEBI" id="CHEBI:29105"/>
        <note>ligand shared between dimeric partners</note>
    </ligand>
</feature>
<feature type="binding site" evidence="1">
    <location>
        <position position="80"/>
    </location>
    <ligand>
        <name>Mg(2+)</name>
        <dbReference type="ChEBI" id="CHEBI:18420"/>
    </ligand>
</feature>
<feature type="binding site" evidence="1">
    <location>
        <position position="82"/>
    </location>
    <ligand>
        <name>Mg(2+)</name>
        <dbReference type="ChEBI" id="CHEBI:18420"/>
    </ligand>
</feature>
<feature type="binding site" evidence="1">
    <location>
        <position position="96"/>
    </location>
    <ligand>
        <name>Zn(2+)</name>
        <dbReference type="ChEBI" id="CHEBI:29105"/>
        <note>ligand shared between dimeric partners</note>
    </ligand>
</feature>
<feature type="binding site" evidence="1">
    <location>
        <position position="103"/>
    </location>
    <ligand>
        <name>Zn(2+)</name>
        <dbReference type="ChEBI" id="CHEBI:29105"/>
        <note>ligand shared between dimeric partners</note>
    </ligand>
</feature>